<evidence type="ECO:0000250" key="1"/>
<evidence type="ECO:0000255" key="2">
    <source>
        <dbReference type="HAMAP-Rule" id="MF_00539"/>
    </source>
</evidence>
<evidence type="ECO:0000256" key="3">
    <source>
        <dbReference type="SAM" id="MobiDB-lite"/>
    </source>
</evidence>
<evidence type="ECO:0000305" key="4"/>
<evidence type="ECO:0007829" key="5">
    <source>
        <dbReference type="PDB" id="4V63"/>
    </source>
</evidence>
<evidence type="ECO:0007829" key="6">
    <source>
        <dbReference type="PDB" id="4V67"/>
    </source>
</evidence>
<evidence type="ECO:0007829" key="7">
    <source>
        <dbReference type="PDB" id="4V84"/>
    </source>
</evidence>
<evidence type="ECO:0007829" key="8">
    <source>
        <dbReference type="PDB" id="4V9K"/>
    </source>
</evidence>
<sequence length="85" mass="9480">MAHKKGLGSTKNGRDSQAKRLGVKRYEGQVVRAGNILVRQRGTRFKPGKNVGMGRDFTLFALVDGVVEFQDRGRLGRYVHVRPLA</sequence>
<comment type="similarity">
    <text evidence="2">Belongs to the bacterial ribosomal protein bL27 family.</text>
</comment>
<reference key="1">
    <citation type="journal article" date="2004" name="Nat. Biotechnol.">
        <title>The genome sequence of the extreme thermophile Thermus thermophilus.</title>
        <authorList>
            <person name="Henne A."/>
            <person name="Brueggemann H."/>
            <person name="Raasch C."/>
            <person name="Wiezer A."/>
            <person name="Hartsch T."/>
            <person name="Liesegang H."/>
            <person name="Johann A."/>
            <person name="Lienard T."/>
            <person name="Gohl O."/>
            <person name="Martinez-Arias R."/>
            <person name="Jacobi C."/>
            <person name="Starkuviene V."/>
            <person name="Schlenczeck S."/>
            <person name="Dencker S."/>
            <person name="Huber R."/>
            <person name="Klenk H.-P."/>
            <person name="Kramer W."/>
            <person name="Merkl R."/>
            <person name="Gottschalk G."/>
            <person name="Fritz H.-J."/>
        </authorList>
    </citation>
    <scope>NUCLEOTIDE SEQUENCE [LARGE SCALE GENOMIC DNA]</scope>
    <source>
        <strain>ATCC BAA-163 / DSM 7039 / HB27</strain>
    </source>
</reference>
<protein>
    <recommendedName>
        <fullName evidence="2">Large ribosomal subunit protein bL27</fullName>
    </recommendedName>
    <alternativeName>
        <fullName evidence="4">50S ribosomal protein L27</fullName>
    </alternativeName>
</protein>
<keyword id="KW-0002">3D-structure</keyword>
<keyword id="KW-0687">Ribonucleoprotein</keyword>
<keyword id="KW-0689">Ribosomal protein</keyword>
<gene>
    <name evidence="2" type="primary">rpmA</name>
    <name type="ordered locus">TT_C1423</name>
</gene>
<proteinExistence type="evidence at protein level"/>
<organism>
    <name type="scientific">Thermus thermophilus (strain ATCC BAA-163 / DSM 7039 / HB27)</name>
    <dbReference type="NCBI Taxonomy" id="262724"/>
    <lineage>
        <taxon>Bacteria</taxon>
        <taxon>Thermotogati</taxon>
        <taxon>Deinococcota</taxon>
        <taxon>Deinococci</taxon>
        <taxon>Thermales</taxon>
        <taxon>Thermaceae</taxon>
        <taxon>Thermus</taxon>
    </lineage>
</organism>
<dbReference type="EMBL" id="AE017221">
    <property type="protein sequence ID" value="AAS81765.1"/>
    <property type="molecule type" value="Genomic_DNA"/>
</dbReference>
<dbReference type="RefSeq" id="WP_008633580.1">
    <property type="nucleotide sequence ID" value="NC_005835.1"/>
</dbReference>
<dbReference type="PDB" id="4V4I">
    <property type="method" value="X-ray"/>
    <property type="resolution" value="3.71 A"/>
    <property type="chains" value="U=1-85"/>
</dbReference>
<dbReference type="PDB" id="4V4J">
    <property type="method" value="X-ray"/>
    <property type="resolution" value="3.83 A"/>
    <property type="chains" value="U=1-85"/>
</dbReference>
<dbReference type="PDB" id="4V63">
    <property type="method" value="X-ray"/>
    <property type="resolution" value="3.21 A"/>
    <property type="chains" value="B0/D0=1-85"/>
</dbReference>
<dbReference type="PDB" id="4V67">
    <property type="method" value="X-ray"/>
    <property type="resolution" value="3.00 A"/>
    <property type="chains" value="B0/D0=1-85"/>
</dbReference>
<dbReference type="PDB" id="4V7P">
    <property type="method" value="X-ray"/>
    <property type="resolution" value="3.62 A"/>
    <property type="chains" value="BW/CW=2-85"/>
</dbReference>
<dbReference type="PDB" id="4V83">
    <property type="method" value="X-ray"/>
    <property type="resolution" value="3.50 A"/>
    <property type="chains" value="BW/DW=10-85"/>
</dbReference>
<dbReference type="PDB" id="4V84">
    <property type="method" value="X-ray"/>
    <property type="resolution" value="3.40 A"/>
    <property type="chains" value="BW/DW=10-85"/>
</dbReference>
<dbReference type="PDB" id="4V9J">
    <property type="method" value="X-ray"/>
    <property type="resolution" value="3.86 A"/>
    <property type="chains" value="B0/D0=2-85"/>
</dbReference>
<dbReference type="PDB" id="4V9K">
    <property type="method" value="X-ray"/>
    <property type="resolution" value="3.50 A"/>
    <property type="chains" value="B0/D0=2-85"/>
</dbReference>
<dbReference type="PDB" id="4V9L">
    <property type="method" value="X-ray"/>
    <property type="resolution" value="3.50 A"/>
    <property type="chains" value="B0/D0=2-85"/>
</dbReference>
<dbReference type="PDB" id="4V9M">
    <property type="method" value="X-ray"/>
    <property type="resolution" value="4.00 A"/>
    <property type="chains" value="B0/D0=2-85"/>
</dbReference>
<dbReference type="PDB" id="4V9N">
    <property type="method" value="X-ray"/>
    <property type="resolution" value="3.40 A"/>
    <property type="chains" value="B0/D0=10-85"/>
</dbReference>
<dbReference type="PDB" id="4V9Q">
    <property type="method" value="X-ray"/>
    <property type="resolution" value="3.40 A"/>
    <property type="chains" value="AW/CW=10-85"/>
</dbReference>
<dbReference type="PDB" id="4W29">
    <property type="method" value="X-ray"/>
    <property type="resolution" value="3.80 A"/>
    <property type="chains" value="B0/D0=2-85"/>
</dbReference>
<dbReference type="PDB" id="4XEJ">
    <property type="method" value="X-ray"/>
    <property type="resolution" value="3.80 A"/>
    <property type="chains" value="AL27/BL27=10-85"/>
</dbReference>
<dbReference type="PDB" id="5J4D">
    <property type="method" value="X-ray"/>
    <property type="resolution" value="3.10 A"/>
    <property type="chains" value="CC/X=1-85"/>
</dbReference>
<dbReference type="PDB" id="5V8I">
    <property type="method" value="X-ray"/>
    <property type="resolution" value="3.25 A"/>
    <property type="chains" value="10/20=1-85"/>
</dbReference>
<dbReference type="PDB" id="6B4V">
    <property type="method" value="X-ray"/>
    <property type="resolution" value="3.40 A"/>
    <property type="chains" value="BC/X=1-85"/>
</dbReference>
<dbReference type="PDB" id="6BOH">
    <property type="method" value="X-ray"/>
    <property type="resolution" value="3.40 A"/>
    <property type="chains" value="CC/X=1-85"/>
</dbReference>
<dbReference type="PDB" id="6BOK">
    <property type="method" value="X-ray"/>
    <property type="resolution" value="3.55 A"/>
    <property type="chains" value="AC/X=1-85"/>
</dbReference>
<dbReference type="PDBsum" id="4V4I"/>
<dbReference type="PDBsum" id="4V4J"/>
<dbReference type="PDBsum" id="4V63"/>
<dbReference type="PDBsum" id="4V67"/>
<dbReference type="PDBsum" id="4V7P"/>
<dbReference type="PDBsum" id="4V83"/>
<dbReference type="PDBsum" id="4V84"/>
<dbReference type="PDBsum" id="4V9J"/>
<dbReference type="PDBsum" id="4V9K"/>
<dbReference type="PDBsum" id="4V9L"/>
<dbReference type="PDBsum" id="4V9M"/>
<dbReference type="PDBsum" id="4V9N"/>
<dbReference type="PDBsum" id="4V9Q"/>
<dbReference type="PDBsum" id="4W29"/>
<dbReference type="PDBsum" id="4XEJ"/>
<dbReference type="PDBsum" id="5J4D"/>
<dbReference type="PDBsum" id="5V8I"/>
<dbReference type="PDBsum" id="6B4V"/>
<dbReference type="PDBsum" id="6BOH"/>
<dbReference type="PDBsum" id="6BOK"/>
<dbReference type="SMR" id="Q72HR3"/>
<dbReference type="IntAct" id="Q72HR3">
    <property type="interactions" value="4"/>
</dbReference>
<dbReference type="KEGG" id="tth:TT_C1423"/>
<dbReference type="eggNOG" id="COG0211">
    <property type="taxonomic scope" value="Bacteria"/>
</dbReference>
<dbReference type="HOGENOM" id="CLU_095424_4_0_0"/>
<dbReference type="OrthoDB" id="9803474at2"/>
<dbReference type="Proteomes" id="UP000000592">
    <property type="component" value="Chromosome"/>
</dbReference>
<dbReference type="GO" id="GO:0022625">
    <property type="term" value="C:cytosolic large ribosomal subunit"/>
    <property type="evidence" value="ECO:0007669"/>
    <property type="project" value="TreeGrafter"/>
</dbReference>
<dbReference type="GO" id="GO:0003735">
    <property type="term" value="F:structural constituent of ribosome"/>
    <property type="evidence" value="ECO:0007669"/>
    <property type="project" value="InterPro"/>
</dbReference>
<dbReference type="GO" id="GO:0006412">
    <property type="term" value="P:translation"/>
    <property type="evidence" value="ECO:0007669"/>
    <property type="project" value="UniProtKB-UniRule"/>
</dbReference>
<dbReference type="FunFam" id="2.40.50.100:FF:000004">
    <property type="entry name" value="50S ribosomal protein L27"/>
    <property type="match status" value="1"/>
</dbReference>
<dbReference type="Gene3D" id="2.40.50.100">
    <property type="match status" value="1"/>
</dbReference>
<dbReference type="HAMAP" id="MF_00539">
    <property type="entry name" value="Ribosomal_bL27"/>
    <property type="match status" value="1"/>
</dbReference>
<dbReference type="InterPro" id="IPR001684">
    <property type="entry name" value="Ribosomal_bL27"/>
</dbReference>
<dbReference type="InterPro" id="IPR018261">
    <property type="entry name" value="Ribosomal_bL27_CS"/>
</dbReference>
<dbReference type="NCBIfam" id="TIGR00062">
    <property type="entry name" value="L27"/>
    <property type="match status" value="1"/>
</dbReference>
<dbReference type="PANTHER" id="PTHR15893:SF0">
    <property type="entry name" value="LARGE RIBOSOMAL SUBUNIT PROTEIN BL27M"/>
    <property type="match status" value="1"/>
</dbReference>
<dbReference type="PANTHER" id="PTHR15893">
    <property type="entry name" value="RIBOSOMAL PROTEIN L27"/>
    <property type="match status" value="1"/>
</dbReference>
<dbReference type="Pfam" id="PF01016">
    <property type="entry name" value="Ribosomal_L27"/>
    <property type="match status" value="1"/>
</dbReference>
<dbReference type="PRINTS" id="PR00063">
    <property type="entry name" value="RIBOSOMALL27"/>
</dbReference>
<dbReference type="SUPFAM" id="SSF110324">
    <property type="entry name" value="Ribosomal L27 protein-like"/>
    <property type="match status" value="1"/>
</dbReference>
<dbReference type="PROSITE" id="PS00831">
    <property type="entry name" value="RIBOSOMAL_L27"/>
    <property type="match status" value="1"/>
</dbReference>
<feature type="initiator methionine" description="Removed" evidence="1">
    <location>
        <position position="1"/>
    </location>
</feature>
<feature type="chain" id="PRO_0000181193" description="Large ribosomal subunit protein bL27">
    <location>
        <begin position="2"/>
        <end position="85"/>
    </location>
</feature>
<feature type="region of interest" description="Disordered" evidence="3">
    <location>
        <begin position="1"/>
        <end position="21"/>
    </location>
</feature>
<feature type="strand" evidence="6">
    <location>
        <begin position="22"/>
        <end position="25"/>
    </location>
</feature>
<feature type="strand" evidence="8">
    <location>
        <begin position="27"/>
        <end position="34"/>
    </location>
</feature>
<feature type="strand" evidence="6">
    <location>
        <begin position="36"/>
        <end position="39"/>
    </location>
</feature>
<feature type="strand" evidence="6">
    <location>
        <begin position="41"/>
        <end position="46"/>
    </location>
</feature>
<feature type="strand" evidence="6">
    <location>
        <begin position="51"/>
        <end position="53"/>
    </location>
</feature>
<feature type="turn" evidence="7">
    <location>
        <begin position="55"/>
        <end position="57"/>
    </location>
</feature>
<feature type="strand" evidence="6">
    <location>
        <begin position="59"/>
        <end position="71"/>
    </location>
</feature>
<feature type="turn" evidence="5">
    <location>
        <begin position="73"/>
        <end position="75"/>
    </location>
</feature>
<feature type="strand" evidence="6">
    <location>
        <begin position="77"/>
        <end position="82"/>
    </location>
</feature>
<accession>Q72HR3</accession>
<name>RL27_THET2</name>